<proteinExistence type="predicted"/>
<name>Y192_ATV</name>
<accession>Q3V4T8</accession>
<protein>
    <recommendedName>
        <fullName>Uncharacterized protein ORF192</fullName>
    </recommendedName>
</protein>
<reference key="1">
    <citation type="journal article" date="2005" name="Nature">
        <title>Virology: independent virus development outside a host.</title>
        <authorList>
            <person name="Haring M."/>
            <person name="Vestergaard G."/>
            <person name="Rachel R."/>
            <person name="Chen L."/>
            <person name="Garrett R.A."/>
            <person name="Prangishvili D."/>
        </authorList>
    </citation>
    <scope>NUCLEOTIDE SEQUENCE [GENOMIC DNA]</scope>
</reference>
<sequence length="192" mass="23383">MVRIIAMGQSPLCNFIKEQLKMNIIVYPEFFDNKKLLLQRRVRDYIISLLRNYRKIRYALYPDYYYRDINLPAEITEKITFIYPVHSKNEVEFIAKLKSKYNIIPGFASDSRYRDYDIYWFVNTFREEKWYLGISTWRELREAKRFEFYGGDITGFVLGNHEDRKNPEVLRRKLKEIIEYVSRPQGKQLTLF</sequence>
<feature type="chain" id="PRO_0000389078" description="Uncharacterized protein ORF192">
    <location>
        <begin position="1"/>
        <end position="192"/>
    </location>
</feature>
<dbReference type="EMBL" id="AJ888457">
    <property type="protein sequence ID" value="CAI59876.1"/>
    <property type="molecule type" value="Genomic_DNA"/>
</dbReference>
<dbReference type="RefSeq" id="YP_319900.1">
    <property type="nucleotide sequence ID" value="NC_007409.1"/>
</dbReference>
<dbReference type="GeneID" id="4484278"/>
<dbReference type="KEGG" id="vg:4484278"/>
<dbReference type="OrthoDB" id="35121at10239"/>
<dbReference type="Proteomes" id="UP000002150">
    <property type="component" value="Genome"/>
</dbReference>
<organismHost>
    <name type="scientific">Acidianus convivator</name>
    <dbReference type="NCBI Taxonomy" id="269667"/>
</organismHost>
<organism>
    <name type="scientific">Acidianus two-tailed virus</name>
    <name type="common">ATV</name>
    <dbReference type="NCBI Taxonomy" id="315953"/>
    <lineage>
        <taxon>Viruses</taxon>
        <taxon>Viruses incertae sedis</taxon>
        <taxon>Bicaudaviridae</taxon>
        <taxon>Bicaudavirus</taxon>
    </lineage>
</organism>
<keyword id="KW-1185">Reference proteome</keyword>